<accession>B3E758</accession>
<dbReference type="EC" id="2.5.1.78" evidence="1"/>
<dbReference type="EMBL" id="CP001089">
    <property type="protein sequence ID" value="ACD94938.1"/>
    <property type="molecule type" value="Genomic_DNA"/>
</dbReference>
<dbReference type="RefSeq" id="WP_012469286.1">
    <property type="nucleotide sequence ID" value="NC_010814.1"/>
</dbReference>
<dbReference type="SMR" id="B3E758"/>
<dbReference type="STRING" id="398767.Glov_1216"/>
<dbReference type="KEGG" id="glo:Glov_1216"/>
<dbReference type="eggNOG" id="COG0054">
    <property type="taxonomic scope" value="Bacteria"/>
</dbReference>
<dbReference type="HOGENOM" id="CLU_089358_1_1_7"/>
<dbReference type="OrthoDB" id="9809709at2"/>
<dbReference type="UniPathway" id="UPA00275">
    <property type="reaction ID" value="UER00404"/>
</dbReference>
<dbReference type="Proteomes" id="UP000002420">
    <property type="component" value="Chromosome"/>
</dbReference>
<dbReference type="GO" id="GO:0005829">
    <property type="term" value="C:cytosol"/>
    <property type="evidence" value="ECO:0007669"/>
    <property type="project" value="TreeGrafter"/>
</dbReference>
<dbReference type="GO" id="GO:0009349">
    <property type="term" value="C:riboflavin synthase complex"/>
    <property type="evidence" value="ECO:0007669"/>
    <property type="project" value="InterPro"/>
</dbReference>
<dbReference type="GO" id="GO:0000906">
    <property type="term" value="F:6,7-dimethyl-8-ribityllumazine synthase activity"/>
    <property type="evidence" value="ECO:0007669"/>
    <property type="project" value="UniProtKB-UniRule"/>
</dbReference>
<dbReference type="GO" id="GO:0009231">
    <property type="term" value="P:riboflavin biosynthetic process"/>
    <property type="evidence" value="ECO:0007669"/>
    <property type="project" value="UniProtKB-UniRule"/>
</dbReference>
<dbReference type="CDD" id="cd09209">
    <property type="entry name" value="Lumazine_synthase-I"/>
    <property type="match status" value="1"/>
</dbReference>
<dbReference type="FunFam" id="3.40.50.960:FF:000001">
    <property type="entry name" value="6,7-dimethyl-8-ribityllumazine synthase"/>
    <property type="match status" value="1"/>
</dbReference>
<dbReference type="Gene3D" id="3.40.50.960">
    <property type="entry name" value="Lumazine/riboflavin synthase"/>
    <property type="match status" value="1"/>
</dbReference>
<dbReference type="HAMAP" id="MF_00178">
    <property type="entry name" value="Lumazine_synth"/>
    <property type="match status" value="1"/>
</dbReference>
<dbReference type="InterPro" id="IPR034964">
    <property type="entry name" value="LS"/>
</dbReference>
<dbReference type="InterPro" id="IPR002180">
    <property type="entry name" value="LS/RS"/>
</dbReference>
<dbReference type="InterPro" id="IPR036467">
    <property type="entry name" value="LS/RS_sf"/>
</dbReference>
<dbReference type="NCBIfam" id="TIGR00114">
    <property type="entry name" value="lumazine-synth"/>
    <property type="match status" value="1"/>
</dbReference>
<dbReference type="NCBIfam" id="NF000812">
    <property type="entry name" value="PRK00061.1-4"/>
    <property type="match status" value="1"/>
</dbReference>
<dbReference type="PANTHER" id="PTHR21058:SF0">
    <property type="entry name" value="6,7-DIMETHYL-8-RIBITYLLUMAZINE SYNTHASE"/>
    <property type="match status" value="1"/>
</dbReference>
<dbReference type="PANTHER" id="PTHR21058">
    <property type="entry name" value="6,7-DIMETHYL-8-RIBITYLLUMAZINE SYNTHASE DMRL SYNTHASE LUMAZINE SYNTHASE"/>
    <property type="match status" value="1"/>
</dbReference>
<dbReference type="Pfam" id="PF00885">
    <property type="entry name" value="DMRL_synthase"/>
    <property type="match status" value="1"/>
</dbReference>
<dbReference type="SUPFAM" id="SSF52121">
    <property type="entry name" value="Lumazine synthase"/>
    <property type="match status" value="1"/>
</dbReference>
<feature type="chain" id="PRO_1000098194" description="6,7-dimethyl-8-ribityllumazine synthase">
    <location>
        <begin position="1"/>
        <end position="155"/>
    </location>
</feature>
<feature type="active site" description="Proton donor" evidence="1">
    <location>
        <position position="89"/>
    </location>
</feature>
<feature type="binding site" evidence="1">
    <location>
        <position position="23"/>
    </location>
    <ligand>
        <name>5-amino-6-(D-ribitylamino)uracil</name>
        <dbReference type="ChEBI" id="CHEBI:15934"/>
    </ligand>
</feature>
<feature type="binding site" evidence="1">
    <location>
        <begin position="57"/>
        <end position="59"/>
    </location>
    <ligand>
        <name>5-amino-6-(D-ribitylamino)uracil</name>
        <dbReference type="ChEBI" id="CHEBI:15934"/>
    </ligand>
</feature>
<feature type="binding site" evidence="1">
    <location>
        <begin position="81"/>
        <end position="83"/>
    </location>
    <ligand>
        <name>5-amino-6-(D-ribitylamino)uracil</name>
        <dbReference type="ChEBI" id="CHEBI:15934"/>
    </ligand>
</feature>
<feature type="binding site" evidence="1">
    <location>
        <begin position="86"/>
        <end position="87"/>
    </location>
    <ligand>
        <name>(2S)-2-hydroxy-3-oxobutyl phosphate</name>
        <dbReference type="ChEBI" id="CHEBI:58830"/>
    </ligand>
</feature>
<feature type="binding site" evidence="1">
    <location>
        <position position="114"/>
    </location>
    <ligand>
        <name>5-amino-6-(D-ribitylamino)uracil</name>
        <dbReference type="ChEBI" id="CHEBI:15934"/>
    </ligand>
</feature>
<feature type="binding site" evidence="1">
    <location>
        <position position="128"/>
    </location>
    <ligand>
        <name>(2S)-2-hydroxy-3-oxobutyl phosphate</name>
        <dbReference type="ChEBI" id="CHEBI:58830"/>
    </ligand>
</feature>
<gene>
    <name evidence="1" type="primary">ribH</name>
    <name type="ordered locus">Glov_1216</name>
</gene>
<protein>
    <recommendedName>
        <fullName evidence="1">6,7-dimethyl-8-ribityllumazine synthase</fullName>
        <shortName evidence="1">DMRL synthase</shortName>
        <shortName evidence="1">LS</shortName>
        <shortName evidence="1">Lumazine synthase</shortName>
        <ecNumber evidence="1">2.5.1.78</ecNumber>
    </recommendedName>
</protein>
<proteinExistence type="inferred from homology"/>
<keyword id="KW-1185">Reference proteome</keyword>
<keyword id="KW-0686">Riboflavin biosynthesis</keyword>
<keyword id="KW-0808">Transferase</keyword>
<comment type="function">
    <text evidence="1">Catalyzes the formation of 6,7-dimethyl-8-ribityllumazine by condensation of 5-amino-6-(D-ribitylamino)uracil with 3,4-dihydroxy-2-butanone 4-phosphate. This is the penultimate step in the biosynthesis of riboflavin.</text>
</comment>
<comment type="catalytic activity">
    <reaction evidence="1">
        <text>(2S)-2-hydroxy-3-oxobutyl phosphate + 5-amino-6-(D-ribitylamino)uracil = 6,7-dimethyl-8-(1-D-ribityl)lumazine + phosphate + 2 H2O + H(+)</text>
        <dbReference type="Rhea" id="RHEA:26152"/>
        <dbReference type="ChEBI" id="CHEBI:15377"/>
        <dbReference type="ChEBI" id="CHEBI:15378"/>
        <dbReference type="ChEBI" id="CHEBI:15934"/>
        <dbReference type="ChEBI" id="CHEBI:43474"/>
        <dbReference type="ChEBI" id="CHEBI:58201"/>
        <dbReference type="ChEBI" id="CHEBI:58830"/>
        <dbReference type="EC" id="2.5.1.78"/>
    </reaction>
</comment>
<comment type="pathway">
    <text evidence="1">Cofactor biosynthesis; riboflavin biosynthesis; riboflavin from 2-hydroxy-3-oxobutyl phosphate and 5-amino-6-(D-ribitylamino)uracil: step 1/2.</text>
</comment>
<comment type="similarity">
    <text evidence="1">Belongs to the DMRL synthase family.</text>
</comment>
<organism>
    <name type="scientific">Trichlorobacter lovleyi (strain ATCC BAA-1151 / DSM 17278 / SZ)</name>
    <name type="common">Geobacter lovleyi</name>
    <dbReference type="NCBI Taxonomy" id="398767"/>
    <lineage>
        <taxon>Bacteria</taxon>
        <taxon>Pseudomonadati</taxon>
        <taxon>Thermodesulfobacteriota</taxon>
        <taxon>Desulfuromonadia</taxon>
        <taxon>Geobacterales</taxon>
        <taxon>Geobacteraceae</taxon>
        <taxon>Trichlorobacter</taxon>
    </lineage>
</organism>
<sequence>MPKFIEGNLDAKGLTFGIVVSRFNSFICERLLEGAIDALVRHGANETDITVARIPGAFEIPLAAKTMAASQKFDAVICLGAVIRGSTPHFEYVSSEVSKGVASVSLESGLPIAFGVLTTDTIEQAVERAGTKAGNKGFEAAVTAIETVNVIKAMK</sequence>
<evidence type="ECO:0000255" key="1">
    <source>
        <dbReference type="HAMAP-Rule" id="MF_00178"/>
    </source>
</evidence>
<reference key="1">
    <citation type="submission" date="2008-05" db="EMBL/GenBank/DDBJ databases">
        <title>Complete sequence of chromosome of Geobacter lovleyi SZ.</title>
        <authorList>
            <consortium name="US DOE Joint Genome Institute"/>
            <person name="Lucas S."/>
            <person name="Copeland A."/>
            <person name="Lapidus A."/>
            <person name="Glavina del Rio T."/>
            <person name="Dalin E."/>
            <person name="Tice H."/>
            <person name="Bruce D."/>
            <person name="Goodwin L."/>
            <person name="Pitluck S."/>
            <person name="Chertkov O."/>
            <person name="Meincke L."/>
            <person name="Brettin T."/>
            <person name="Detter J.C."/>
            <person name="Han C."/>
            <person name="Tapia R."/>
            <person name="Kuske C.R."/>
            <person name="Schmutz J."/>
            <person name="Larimer F."/>
            <person name="Land M."/>
            <person name="Hauser L."/>
            <person name="Kyrpides N."/>
            <person name="Mikhailova N."/>
            <person name="Sung Y."/>
            <person name="Fletcher K.E."/>
            <person name="Ritalahti K.M."/>
            <person name="Loeffler F.E."/>
            <person name="Richardson P."/>
        </authorList>
    </citation>
    <scope>NUCLEOTIDE SEQUENCE [LARGE SCALE GENOMIC DNA]</scope>
    <source>
        <strain>ATCC BAA-1151 / DSM 17278 / SZ</strain>
    </source>
</reference>
<name>RISB_TRIL1</name>